<name>NDUV3_GORGO</name>
<dbReference type="EMBL" id="DQ885643">
    <property type="protein sequence ID" value="ABH12152.1"/>
    <property type="molecule type" value="mRNA"/>
</dbReference>
<dbReference type="SMR" id="Q0MQJ1"/>
<dbReference type="FunCoup" id="Q0MQJ1">
    <property type="interactions" value="790"/>
</dbReference>
<dbReference type="STRING" id="9593.ENSGGOP00000014184"/>
<dbReference type="eggNOG" id="ENOG502S46A">
    <property type="taxonomic scope" value="Eukaryota"/>
</dbReference>
<dbReference type="InParanoid" id="Q0MQJ1"/>
<dbReference type="Proteomes" id="UP000001519">
    <property type="component" value="Unplaced"/>
</dbReference>
<dbReference type="GO" id="GO:0005743">
    <property type="term" value="C:mitochondrial inner membrane"/>
    <property type="evidence" value="ECO:0007669"/>
    <property type="project" value="UniProtKB-SubCell"/>
</dbReference>
<dbReference type="GO" id="GO:0045271">
    <property type="term" value="C:respiratory chain complex I"/>
    <property type="evidence" value="ECO:0000250"/>
    <property type="project" value="UniProtKB"/>
</dbReference>
<dbReference type="GO" id="GO:0042775">
    <property type="term" value="P:mitochondrial ATP synthesis coupled electron transport"/>
    <property type="evidence" value="ECO:0000318"/>
    <property type="project" value="GO_Central"/>
</dbReference>
<dbReference type="InterPro" id="IPR026193">
    <property type="entry name" value="NDUFV3"/>
</dbReference>
<dbReference type="PANTHER" id="PTHR17117:SF1">
    <property type="entry name" value="NADH DEHYDROGENASE [UBIQUINONE] FLAVOPROTEIN 3, MITOCHONDRIAL"/>
    <property type="match status" value="1"/>
</dbReference>
<dbReference type="PANTHER" id="PTHR17117">
    <property type="entry name" value="NADH-UBIQUINONE OXIDOREDUCTASE"/>
    <property type="match status" value="1"/>
</dbReference>
<dbReference type="Pfam" id="PF15880">
    <property type="entry name" value="NDUFV3"/>
    <property type="match status" value="1"/>
</dbReference>
<accession>Q0MQJ1</accession>
<reference key="1">
    <citation type="journal article" date="2006" name="Gene">
        <title>Adaptive selection of mitochondrial complex I subunits during primate radiation.</title>
        <authorList>
            <person name="Mishmar D."/>
            <person name="Ruiz-Pesini E."/>
            <person name="Mondragon-Palomino M."/>
            <person name="Procaccio V."/>
            <person name="Gaut B."/>
            <person name="Wallace D.C."/>
        </authorList>
    </citation>
    <scope>NUCLEOTIDE SEQUENCE [MRNA]</scope>
</reference>
<proteinExistence type="inferred from homology"/>
<organism>
    <name type="scientific">Gorilla gorilla gorilla</name>
    <name type="common">Western lowland gorilla</name>
    <dbReference type="NCBI Taxonomy" id="9595"/>
    <lineage>
        <taxon>Eukaryota</taxon>
        <taxon>Metazoa</taxon>
        <taxon>Chordata</taxon>
        <taxon>Craniata</taxon>
        <taxon>Vertebrata</taxon>
        <taxon>Euteleostomi</taxon>
        <taxon>Mammalia</taxon>
        <taxon>Eutheria</taxon>
        <taxon>Euarchontoglires</taxon>
        <taxon>Primates</taxon>
        <taxon>Haplorrhini</taxon>
        <taxon>Catarrhini</taxon>
        <taxon>Hominidae</taxon>
        <taxon>Gorilla</taxon>
    </lineage>
</organism>
<feature type="transit peptide" description="Mitochondrion" evidence="1">
    <location>
        <begin position="1"/>
        <end position="34"/>
    </location>
</feature>
<feature type="chain" id="PRO_0000251882" description="NADH dehydrogenase [ubiquinone] flavoprotein 3, mitochondrial">
    <location>
        <begin position="35"/>
        <end position="108"/>
    </location>
</feature>
<feature type="region of interest" description="Disordered" evidence="3">
    <location>
        <begin position="33"/>
        <end position="72"/>
    </location>
</feature>
<feature type="modified residue" description="Phosphoserine" evidence="2">
    <location>
        <position position="105"/>
    </location>
</feature>
<protein>
    <recommendedName>
        <fullName>NADH dehydrogenase [ubiquinone] flavoprotein 3, mitochondrial</fullName>
    </recommendedName>
    <alternativeName>
        <fullName>Complex I-9kD</fullName>
        <shortName>CI-9kD</shortName>
    </alternativeName>
    <alternativeName>
        <fullName>NADH-ubiquinone oxidoreductase 9 kDa subunit</fullName>
    </alternativeName>
</protein>
<gene>
    <name type="primary">NDUFV3</name>
</gene>
<keyword id="KW-0249">Electron transport</keyword>
<keyword id="KW-0472">Membrane</keyword>
<keyword id="KW-0496">Mitochondrion</keyword>
<keyword id="KW-0999">Mitochondrion inner membrane</keyword>
<keyword id="KW-0597">Phosphoprotein</keyword>
<keyword id="KW-1185">Reference proteome</keyword>
<keyword id="KW-0679">Respiratory chain</keyword>
<keyword id="KW-0809">Transit peptide</keyword>
<keyword id="KW-0813">Transport</keyword>
<comment type="function">
    <text evidence="2">Accessory subunit of the mitochondrial membrane respiratory chain NADH dehydrogenase (Complex I), that is believed not to be involved in catalysis. Complex I functions in the transfer of electrons from NADH to the respiratory chain. The immediate electron acceptor for the enzyme is believed to be ubiquinone. May be the terminally assembled subunit of Complex I.</text>
</comment>
<comment type="subunit">
    <text evidence="2">Complex I is composed of 45 different subunits. This is a component of the flavoprotein-sulfur (FP) fragment of the enzyme.</text>
</comment>
<comment type="subcellular location">
    <subcellularLocation>
        <location evidence="2">Mitochondrion inner membrane</location>
        <topology evidence="2">Peripheral membrane protein</topology>
        <orientation evidence="2">Matrix side</orientation>
    </subcellularLocation>
</comment>
<comment type="similarity">
    <text evidence="4">Belongs to the complex I NDUFV3 subunit family.</text>
</comment>
<sequence length="108" mass="11916">MAASCLLRQGRAGALKTMLQEAQVFRGLASTVSLSAESGKSEKGQPQNSKKQSPPKKPAPVPAEPFDNSTYKNLQHHDYSTYTFLDLNLELSKFRMPQPSSGRESPRH</sequence>
<evidence type="ECO:0000250" key="1"/>
<evidence type="ECO:0000250" key="2">
    <source>
        <dbReference type="UniProtKB" id="P56181"/>
    </source>
</evidence>
<evidence type="ECO:0000256" key="3">
    <source>
        <dbReference type="SAM" id="MobiDB-lite"/>
    </source>
</evidence>
<evidence type="ECO:0000305" key="4"/>